<reference key="1">
    <citation type="submission" date="2007-03" db="EMBL/GenBank/DDBJ databases">
        <title>Complete sequence of Desulfotomaculum reducens MI-1.</title>
        <authorList>
            <consortium name="US DOE Joint Genome Institute"/>
            <person name="Copeland A."/>
            <person name="Lucas S."/>
            <person name="Lapidus A."/>
            <person name="Barry K."/>
            <person name="Detter J.C."/>
            <person name="Glavina del Rio T."/>
            <person name="Hammon N."/>
            <person name="Israni S."/>
            <person name="Dalin E."/>
            <person name="Tice H."/>
            <person name="Pitluck S."/>
            <person name="Sims D."/>
            <person name="Brettin T."/>
            <person name="Bruce D."/>
            <person name="Han C."/>
            <person name="Tapia R."/>
            <person name="Schmutz J."/>
            <person name="Larimer F."/>
            <person name="Land M."/>
            <person name="Hauser L."/>
            <person name="Kyrpides N."/>
            <person name="Kim E."/>
            <person name="Tebo B.M."/>
            <person name="Richardson P."/>
        </authorList>
    </citation>
    <scope>NUCLEOTIDE SEQUENCE [LARGE SCALE GENOMIC DNA]</scope>
    <source>
        <strain>ATCC BAA-1160 / DSM 100696 / MI-1</strain>
    </source>
</reference>
<feature type="chain" id="PRO_1000071434" description="Indole-3-glycerol phosphate synthase">
    <location>
        <begin position="1"/>
        <end position="265"/>
    </location>
</feature>
<sequence length="265" mass="29314">MILEKIKEKKREEIRQLLLTANVAHMKKKILELPPARDFRKALYNQGQVSLIAEIKKASPSKGLLCPNFDHRQLAHIYQSNGAAALSVLTDENFFLGKLTYLEEIKQQSSLPLLRKDFILDPVQLYQSRLAGADAVLLIAGLLTPGELSQLFLLCREIGMQALVEVHTQEELQRVLTTDAKLIGINNRDLSTFQTNLATTAKLLEQVQIEDITIVSESGIAQKEDIKFLKSLGVHGVLVGEALVTAQDIAKKVQEIVVAGGRGEA</sequence>
<comment type="catalytic activity">
    <reaction evidence="1">
        <text>1-(2-carboxyphenylamino)-1-deoxy-D-ribulose 5-phosphate + H(+) = (1S,2R)-1-C-(indol-3-yl)glycerol 3-phosphate + CO2 + H2O</text>
        <dbReference type="Rhea" id="RHEA:23476"/>
        <dbReference type="ChEBI" id="CHEBI:15377"/>
        <dbReference type="ChEBI" id="CHEBI:15378"/>
        <dbReference type="ChEBI" id="CHEBI:16526"/>
        <dbReference type="ChEBI" id="CHEBI:58613"/>
        <dbReference type="ChEBI" id="CHEBI:58866"/>
        <dbReference type="EC" id="4.1.1.48"/>
    </reaction>
</comment>
<comment type="pathway">
    <text evidence="1">Amino-acid biosynthesis; L-tryptophan biosynthesis; L-tryptophan from chorismate: step 4/5.</text>
</comment>
<comment type="similarity">
    <text evidence="1">Belongs to the TrpC family.</text>
</comment>
<name>TRPC_DESRM</name>
<organism>
    <name type="scientific">Desulforamulus reducens (strain ATCC BAA-1160 / DSM 100696 / MI-1)</name>
    <name type="common">Desulfotomaculum reducens</name>
    <dbReference type="NCBI Taxonomy" id="349161"/>
    <lineage>
        <taxon>Bacteria</taxon>
        <taxon>Bacillati</taxon>
        <taxon>Bacillota</taxon>
        <taxon>Clostridia</taxon>
        <taxon>Eubacteriales</taxon>
        <taxon>Peptococcaceae</taxon>
        <taxon>Desulforamulus</taxon>
    </lineage>
</organism>
<keyword id="KW-0028">Amino-acid biosynthesis</keyword>
<keyword id="KW-0057">Aromatic amino acid biosynthesis</keyword>
<keyword id="KW-0210">Decarboxylase</keyword>
<keyword id="KW-0456">Lyase</keyword>
<keyword id="KW-1185">Reference proteome</keyword>
<keyword id="KW-0822">Tryptophan biosynthesis</keyword>
<protein>
    <recommendedName>
        <fullName evidence="1">Indole-3-glycerol phosphate synthase</fullName>
        <shortName evidence="1">IGPS</shortName>
        <ecNumber evidence="1">4.1.1.48</ecNumber>
    </recommendedName>
</protein>
<gene>
    <name evidence="1" type="primary">trpC</name>
    <name type="ordered locus">Dred_0251</name>
</gene>
<dbReference type="EC" id="4.1.1.48" evidence="1"/>
<dbReference type="EMBL" id="CP000612">
    <property type="protein sequence ID" value="ABO48800.1"/>
    <property type="molecule type" value="Genomic_DNA"/>
</dbReference>
<dbReference type="RefSeq" id="WP_011876638.1">
    <property type="nucleotide sequence ID" value="NC_009253.1"/>
</dbReference>
<dbReference type="SMR" id="A4J147"/>
<dbReference type="STRING" id="349161.Dred_0251"/>
<dbReference type="KEGG" id="drm:Dred_0251"/>
<dbReference type="eggNOG" id="COG0134">
    <property type="taxonomic scope" value="Bacteria"/>
</dbReference>
<dbReference type="HOGENOM" id="CLU_034247_2_0_9"/>
<dbReference type="OrthoDB" id="9804217at2"/>
<dbReference type="UniPathway" id="UPA00035">
    <property type="reaction ID" value="UER00043"/>
</dbReference>
<dbReference type="Proteomes" id="UP000001556">
    <property type="component" value="Chromosome"/>
</dbReference>
<dbReference type="GO" id="GO:0004425">
    <property type="term" value="F:indole-3-glycerol-phosphate synthase activity"/>
    <property type="evidence" value="ECO:0007669"/>
    <property type="project" value="UniProtKB-UniRule"/>
</dbReference>
<dbReference type="GO" id="GO:0004640">
    <property type="term" value="F:phosphoribosylanthranilate isomerase activity"/>
    <property type="evidence" value="ECO:0007669"/>
    <property type="project" value="TreeGrafter"/>
</dbReference>
<dbReference type="GO" id="GO:0000162">
    <property type="term" value="P:L-tryptophan biosynthetic process"/>
    <property type="evidence" value="ECO:0007669"/>
    <property type="project" value="UniProtKB-UniRule"/>
</dbReference>
<dbReference type="CDD" id="cd00331">
    <property type="entry name" value="IGPS"/>
    <property type="match status" value="1"/>
</dbReference>
<dbReference type="FunFam" id="3.20.20.70:FF:000024">
    <property type="entry name" value="Indole-3-glycerol phosphate synthase"/>
    <property type="match status" value="1"/>
</dbReference>
<dbReference type="Gene3D" id="3.20.20.70">
    <property type="entry name" value="Aldolase class I"/>
    <property type="match status" value="1"/>
</dbReference>
<dbReference type="HAMAP" id="MF_00134_B">
    <property type="entry name" value="IGPS_B"/>
    <property type="match status" value="1"/>
</dbReference>
<dbReference type="InterPro" id="IPR013785">
    <property type="entry name" value="Aldolase_TIM"/>
</dbReference>
<dbReference type="InterPro" id="IPR045186">
    <property type="entry name" value="Indole-3-glycerol_P_synth"/>
</dbReference>
<dbReference type="InterPro" id="IPR013798">
    <property type="entry name" value="Indole-3-glycerol_P_synth_dom"/>
</dbReference>
<dbReference type="InterPro" id="IPR001468">
    <property type="entry name" value="Indole-3-GlycerolPSynthase_CS"/>
</dbReference>
<dbReference type="InterPro" id="IPR011060">
    <property type="entry name" value="RibuloseP-bd_barrel"/>
</dbReference>
<dbReference type="NCBIfam" id="NF001377">
    <property type="entry name" value="PRK00278.2-4"/>
    <property type="match status" value="1"/>
</dbReference>
<dbReference type="PANTHER" id="PTHR22854:SF2">
    <property type="entry name" value="INDOLE-3-GLYCEROL-PHOSPHATE SYNTHASE"/>
    <property type="match status" value="1"/>
</dbReference>
<dbReference type="PANTHER" id="PTHR22854">
    <property type="entry name" value="TRYPTOPHAN BIOSYNTHESIS PROTEIN"/>
    <property type="match status" value="1"/>
</dbReference>
<dbReference type="Pfam" id="PF00218">
    <property type="entry name" value="IGPS"/>
    <property type="match status" value="1"/>
</dbReference>
<dbReference type="SUPFAM" id="SSF51366">
    <property type="entry name" value="Ribulose-phoshate binding barrel"/>
    <property type="match status" value="1"/>
</dbReference>
<dbReference type="PROSITE" id="PS00614">
    <property type="entry name" value="IGPS"/>
    <property type="match status" value="1"/>
</dbReference>
<evidence type="ECO:0000255" key="1">
    <source>
        <dbReference type="HAMAP-Rule" id="MF_00134"/>
    </source>
</evidence>
<accession>A4J147</accession>
<proteinExistence type="inferred from homology"/>